<keyword id="KW-0972">Capsule biogenesis/degradation</keyword>
<keyword id="KW-1003">Cell membrane</keyword>
<keyword id="KW-0328">Glycosyltransferase</keyword>
<keyword id="KW-0472">Membrane</keyword>
<keyword id="KW-0808">Transferase</keyword>
<keyword id="KW-0812">Transmembrane</keyword>
<keyword id="KW-1133">Transmembrane helix</keyword>
<keyword id="KW-0843">Virulence</keyword>
<accession>Q8NKX1</accession>
<gene>
    <name type="primary">hasA</name>
    <name type="ordered locus">spyM18_2236</name>
</gene>
<name>HASA_STRP8</name>
<dbReference type="EC" id="2.4.1.212"/>
<dbReference type="EMBL" id="AE009949">
    <property type="protein sequence ID" value="AAL98667.1"/>
    <property type="molecule type" value="Genomic_DNA"/>
</dbReference>
<dbReference type="PIR" id="A53100">
    <property type="entry name" value="A53100"/>
</dbReference>
<dbReference type="RefSeq" id="WP_011018340.1">
    <property type="nucleotide sequence ID" value="NC_003485.1"/>
</dbReference>
<dbReference type="SMR" id="Q8NKX1"/>
<dbReference type="CAZy" id="GT2">
    <property type="family name" value="Glycosyltransferase Family 2"/>
</dbReference>
<dbReference type="KEGG" id="spm:spyM18_2236"/>
<dbReference type="HOGENOM" id="CLU_029695_4_0_9"/>
<dbReference type="UniPathway" id="UPA00341"/>
<dbReference type="PHI-base" id="PHI:5099"/>
<dbReference type="GO" id="GO:0005886">
    <property type="term" value="C:plasma membrane"/>
    <property type="evidence" value="ECO:0007669"/>
    <property type="project" value="UniProtKB-SubCell"/>
</dbReference>
<dbReference type="GO" id="GO:0050501">
    <property type="term" value="F:hyaluronan synthase activity"/>
    <property type="evidence" value="ECO:0007669"/>
    <property type="project" value="UniProtKB-EC"/>
</dbReference>
<dbReference type="GO" id="GO:0085029">
    <property type="term" value="P:extracellular matrix assembly"/>
    <property type="evidence" value="ECO:0007669"/>
    <property type="project" value="TreeGrafter"/>
</dbReference>
<dbReference type="GO" id="GO:0030213">
    <property type="term" value="P:hyaluronan biosynthetic process"/>
    <property type="evidence" value="ECO:0007669"/>
    <property type="project" value="UniProtKB-UniPathway"/>
</dbReference>
<dbReference type="CDD" id="cd06423">
    <property type="entry name" value="CESA_like"/>
    <property type="match status" value="1"/>
</dbReference>
<dbReference type="Gene3D" id="3.90.550.10">
    <property type="entry name" value="Spore Coat Polysaccharide Biosynthesis Protein SpsA, Chain A"/>
    <property type="match status" value="1"/>
</dbReference>
<dbReference type="InterPro" id="IPR001173">
    <property type="entry name" value="Glyco_trans_2-like"/>
</dbReference>
<dbReference type="InterPro" id="IPR029044">
    <property type="entry name" value="Nucleotide-diphossugar_trans"/>
</dbReference>
<dbReference type="PANTHER" id="PTHR22913">
    <property type="entry name" value="HYALURONAN SYNTHASE"/>
    <property type="match status" value="1"/>
</dbReference>
<dbReference type="PANTHER" id="PTHR22913:SF12">
    <property type="entry name" value="MANNURONAN SYNTHASE"/>
    <property type="match status" value="1"/>
</dbReference>
<dbReference type="Pfam" id="PF00535">
    <property type="entry name" value="Glycos_transf_2"/>
    <property type="match status" value="1"/>
</dbReference>
<dbReference type="SUPFAM" id="SSF53448">
    <property type="entry name" value="Nucleotide-diphospho-sugar transferases"/>
    <property type="match status" value="1"/>
</dbReference>
<reference key="1">
    <citation type="journal article" date="2002" name="Proc. Natl. Acad. Sci. U.S.A.">
        <title>Genome sequence and comparative microarray analysis of serotype M18 group A Streptococcus strains associated with acute rheumatic fever outbreaks.</title>
        <authorList>
            <person name="Smoot J.C."/>
            <person name="Barbian K.D."/>
            <person name="Van Gompel J.J."/>
            <person name="Smoot L.M."/>
            <person name="Chaussee M.S."/>
            <person name="Sylva G.L."/>
            <person name="Sturdevant D.E."/>
            <person name="Ricklefs S.M."/>
            <person name="Porcella S.F."/>
            <person name="Parkins L.D."/>
            <person name="Beres S.B."/>
            <person name="Campbell D.S."/>
            <person name="Smith T.M."/>
            <person name="Zhang Q."/>
            <person name="Kapur V."/>
            <person name="Daly J.A."/>
            <person name="Veasy L.G."/>
            <person name="Musser J.M."/>
        </authorList>
    </citation>
    <scope>NUCLEOTIDE SEQUENCE [LARGE SCALE GENOMIC DNA]</scope>
    <source>
        <strain>MGAS8232</strain>
    </source>
</reference>
<comment type="function">
    <text>Glycosaminoglycan synthesis. The hyaluronic acid capsule is involved in the pathogenicity of group A Streptococci; it may be the major virulence determinant.</text>
</comment>
<comment type="catalytic activity">
    <reaction>
        <text>[hyaluronan](n) + UDP-N-acetyl-alpha-D-glucosamine = N-acetyl-beta-D-glucosaminyl-(1-&gt;4)-[hyaluronan](n) + UDP + H(+)</text>
        <dbReference type="Rhea" id="RHEA:20465"/>
        <dbReference type="Rhea" id="RHEA-COMP:12583"/>
        <dbReference type="Rhea" id="RHEA-COMP:12585"/>
        <dbReference type="ChEBI" id="CHEBI:15378"/>
        <dbReference type="ChEBI" id="CHEBI:57705"/>
        <dbReference type="ChEBI" id="CHEBI:58223"/>
        <dbReference type="ChEBI" id="CHEBI:132153"/>
        <dbReference type="ChEBI" id="CHEBI:132154"/>
        <dbReference type="EC" id="2.4.1.212"/>
    </reaction>
</comment>
<comment type="catalytic activity">
    <reaction>
        <text>N-acetyl-beta-D-glucosaminyl-(1-&gt;4)-[hyaluronan](n) + UDP-alpha-D-glucuronate = [hyaluronan](n+1) + UDP + H(+)</text>
        <dbReference type="Rhea" id="RHEA:12528"/>
        <dbReference type="Rhea" id="RHEA-COMP:12585"/>
        <dbReference type="Rhea" id="RHEA-COMP:12587"/>
        <dbReference type="ChEBI" id="CHEBI:15378"/>
        <dbReference type="ChEBI" id="CHEBI:58052"/>
        <dbReference type="ChEBI" id="CHEBI:58223"/>
        <dbReference type="ChEBI" id="CHEBI:132153"/>
        <dbReference type="ChEBI" id="CHEBI:132154"/>
        <dbReference type="EC" id="2.4.1.212"/>
    </reaction>
</comment>
<comment type="cofactor">
    <cofactor>
        <name>Mg(2+)</name>
        <dbReference type="ChEBI" id="CHEBI:18420"/>
    </cofactor>
</comment>
<comment type="pathway">
    <text>Glycan biosynthesis; hyaluronan biosynthesis.</text>
</comment>
<comment type="subcellular location">
    <subcellularLocation>
        <location>Cell membrane</location>
        <topology>Multi-pass membrane protein</topology>
    </subcellularLocation>
</comment>
<comment type="similarity">
    <text evidence="2">Belongs to the NodC/HAS family.</text>
</comment>
<comment type="caution">
    <text evidence="2">It is uncertain whether Met-1 or Met-25 is the initiator.</text>
</comment>
<sequence>MPIFKKTLIVLSFIFLISILIYLNMYLFGTSTVGIYGVILITYLVIKLGLSFLYEPFKGKPHDYKVAAVIPSYNEDAESLLETLKSVLAQTYPLSEIYIVDDGSSNTDAIQLIEEYVNREVDICRNVIVHRSLVNKGKRHAQAWAFERSDADVFLTVDSDTYIYPNALEELLKSFNDETVYAATGHLNARNRQTNLLTRLTDIRYDNAFGVERAAQSLTGNILVCSGPLSIYRREVIIPNLERYKNQTFLGLPVSIGDDRCLTNYAIDLGRTVYQSTARCDTDVPFQLKSYLKQQNRWNKSFFRESIISVKKILSNPIVALWTIFEVVMFMMLIVAIGNLLFNQAIQLDLIKLFAFLSIIFIVALCRNVHYMVKHPASFLLSPLYGILHLFVLQPLKLYSLCTIKNTEWGTRKKVTIFK</sequence>
<organism>
    <name type="scientific">Streptococcus pyogenes serotype M18 (strain MGAS8232)</name>
    <dbReference type="NCBI Taxonomy" id="186103"/>
    <lineage>
        <taxon>Bacteria</taxon>
        <taxon>Bacillati</taxon>
        <taxon>Bacillota</taxon>
        <taxon>Bacilli</taxon>
        <taxon>Lactobacillales</taxon>
        <taxon>Streptococcaceae</taxon>
        <taxon>Streptococcus</taxon>
    </lineage>
</organism>
<protein>
    <recommendedName>
        <fullName>Hyaluronan synthase</fullName>
        <ecNumber>2.4.1.212</ecNumber>
    </recommendedName>
    <alternativeName>
        <fullName>Hyaluronate synthase</fullName>
    </alternativeName>
    <alternativeName>
        <fullName>Hyaluronic acid synthase</fullName>
        <shortName>HA synthase</shortName>
    </alternativeName>
</protein>
<evidence type="ECO:0000255" key="1"/>
<evidence type="ECO:0000305" key="2"/>
<proteinExistence type="inferred from homology"/>
<feature type="chain" id="PRO_0000197168" description="Hyaluronan synthase">
    <location>
        <begin position="1"/>
        <end position="419"/>
    </location>
</feature>
<feature type="transmembrane region" description="Helical" evidence="1">
    <location>
        <begin position="8"/>
        <end position="28"/>
    </location>
</feature>
<feature type="transmembrane region" description="Helical" evidence="1">
    <location>
        <begin position="33"/>
        <end position="53"/>
    </location>
</feature>
<feature type="transmembrane region" description="Helical" evidence="1">
    <location>
        <begin position="318"/>
        <end position="338"/>
    </location>
</feature>
<feature type="transmembrane region" description="Helical" evidence="1">
    <location>
        <begin position="345"/>
        <end position="365"/>
    </location>
</feature>
<feature type="transmembrane region" description="Helical" evidence="1">
    <location>
        <begin position="376"/>
        <end position="396"/>
    </location>
</feature>